<accession>Q7LZG2</accession>
<sequence length="27" mass="2901">NLAQFGFMIRCANGGSRSALDYADYGC</sequence>
<name>PA2T_OXYSC</name>
<dbReference type="EC" id="3.1.1.4"/>
<dbReference type="PIR" id="A34280">
    <property type="entry name" value="A34280"/>
</dbReference>
<dbReference type="PIR" id="S21101">
    <property type="entry name" value="S21101"/>
</dbReference>
<dbReference type="SMR" id="Q7LZG2"/>
<dbReference type="GO" id="GO:0005576">
    <property type="term" value="C:extracellular region"/>
    <property type="evidence" value="ECO:0007669"/>
    <property type="project" value="UniProtKB-SubCell"/>
</dbReference>
<dbReference type="GO" id="GO:0046872">
    <property type="term" value="F:metal ion binding"/>
    <property type="evidence" value="ECO:0007669"/>
    <property type="project" value="UniProtKB-KW"/>
</dbReference>
<dbReference type="GO" id="GO:0004623">
    <property type="term" value="F:phospholipase A2 activity"/>
    <property type="evidence" value="ECO:0007669"/>
    <property type="project" value="UniProtKB-EC"/>
</dbReference>
<dbReference type="GO" id="GO:0015459">
    <property type="term" value="F:potassium channel regulator activity"/>
    <property type="evidence" value="ECO:0007669"/>
    <property type="project" value="UniProtKB-KW"/>
</dbReference>
<dbReference type="GO" id="GO:0090729">
    <property type="term" value="F:toxin activity"/>
    <property type="evidence" value="ECO:0007669"/>
    <property type="project" value="UniProtKB-KW"/>
</dbReference>
<dbReference type="GO" id="GO:0050482">
    <property type="term" value="P:arachidonate secretion"/>
    <property type="evidence" value="ECO:0007669"/>
    <property type="project" value="InterPro"/>
</dbReference>
<dbReference type="GO" id="GO:0016042">
    <property type="term" value="P:lipid catabolic process"/>
    <property type="evidence" value="ECO:0007669"/>
    <property type="project" value="UniProtKB-KW"/>
</dbReference>
<dbReference type="GO" id="GO:0006644">
    <property type="term" value="P:phospholipid metabolic process"/>
    <property type="evidence" value="ECO:0007669"/>
    <property type="project" value="InterPro"/>
</dbReference>
<dbReference type="InterPro" id="IPR036444">
    <property type="entry name" value="PLipase_A2_dom_sf"/>
</dbReference>
<dbReference type="SUPFAM" id="SSF48619">
    <property type="entry name" value="Phospholipase A2, PLA2"/>
    <property type="match status" value="1"/>
</dbReference>
<reference key="1">
    <citation type="journal article" date="1992" name="Biochim. Biophys. Acta">
        <title>Anionic currents of chick sensory neurons are affected by a phospholipase A2 purified from the venom of the taipan snake.</title>
        <authorList>
            <person name="Possani L.D."/>
            <person name="Mochca-Morales J."/>
            <person name="Amezcua J."/>
            <person name="Martin B.M."/>
            <person name="Prestipino G."/>
            <person name="Nobile M."/>
        </authorList>
    </citation>
    <scope>PROTEIN SEQUENCE</scope>
    <scope>FUNCTION</scope>
    <scope>SUBCELLULAR LOCATION</scope>
    <scope>TISSUE SPECIFICITY</scope>
    <scope>TOXIC DOSE</scope>
    <source>
        <tissue>Venom</tissue>
    </source>
</reference>
<reference key="2">
    <citation type="journal article" date="1992" name="Toxicon">
        <title>Isolation and physiological characterization of taicatoxin, a complex toxin with specific effects on calcium channels.</title>
        <authorList>
            <person name="Possani L.D."/>
            <person name="Martin B.M."/>
            <person name="Yatani A."/>
            <person name="Mochca-Morales J."/>
            <person name="Zamudio F.Z."/>
            <person name="Gurrola G.B."/>
            <person name="Brown A.M."/>
        </authorList>
    </citation>
    <scope>PROTEIN SEQUENCE</scope>
    <scope>FUNCTION</scope>
    <scope>SUBUNIT</scope>
    <scope>SUBCELLULAR LOCATION</scope>
    <scope>TISSUE SPECIFICITY</scope>
    <scope>TOXIC DOSE</scope>
    <source>
        <tissue>Venom</tissue>
    </source>
</reference>
<reference key="3">
    <citation type="journal article" date="1996" name="Mol. Cell. Biochem.">
        <title>Effect of TaiCatoxin (TCX) on the electrophysiological, mechanical and biochemical characteristics of spontaneously beating ventricular cardiomyocytes.</title>
        <authorList>
            <person name="Fantini E."/>
            <person name="Athias P."/>
            <person name="Tirosh R."/>
            <person name="Pinson A."/>
        </authorList>
    </citation>
    <scope>FUNCTION</scope>
</reference>
<reference key="4">
    <citation type="journal article" date="1997" name="J. Biol. Chem.">
        <title>A novel small conductance Ca2+-activated K+ channel blocker from Oxyuranus scutellatus taipan venom. Re-evaluation of taicatoxin as a selective Ca2+ channel probe.</title>
        <authorList>
            <person name="Doorty K.B."/>
            <person name="Bevan S."/>
            <person name="Wadsworth J.D.F."/>
            <person name="Strong P.N."/>
        </authorList>
    </citation>
    <scope>FUNCTION</scope>
</reference>
<reference key="5">
    <citation type="journal article" date="2005" name="Hear. Res.">
        <title>Taicatoxin inhibits the calcium-dependent slow motility of mammalian outer hair cells.</title>
        <authorList>
            <person name="Su M.-C."/>
            <person name="Lee S.-Y."/>
            <person name="Tan C.-T."/>
            <person name="Su C.-C."/>
            <person name="Li S.-Y."/>
            <person name="Lin R.-H."/>
            <person name="Hung C.-C."/>
            <person name="Lin M.-J."/>
        </authorList>
    </citation>
    <scope>FUNCTION</scope>
</reference>
<feature type="chain" id="PRO_0000408515" description="Phospholipase A2 taicatoxin">
    <location>
        <begin position="1" status="less than"/>
        <end position="27" status="greater than"/>
    </location>
</feature>
<feature type="non-terminal residue">
    <location>
        <position position="1"/>
    </location>
</feature>
<feature type="non-terminal residue">
    <location>
        <position position="27"/>
    </location>
</feature>
<protein>
    <recommendedName>
        <fullName>Phospholipase A2 taicatoxin</fullName>
        <shortName>TCX</shortName>
        <shortName>svPLA2</shortName>
        <ecNumber>3.1.1.4</ecNumber>
    </recommendedName>
    <alternativeName>
        <fullName>Phosphatidylcholine 2-acylhydrolase</fullName>
    </alternativeName>
</protein>
<comment type="function">
    <text>Heterotrimer: blocks the voltage-dependent L-type calcium channels from the heart, and the small conductance calcium-activated potassium channels in the chromaffin cells and in the brain. Is very toxic to mice.</text>
</comment>
<comment type="function">
    <text>Monomer: Snake venom phospholipase A2 (PLA2) that has neurotoxic activities. Voltage-dependently affects ionic currents in chick (Gallus domesticus) dorsal root ganglion cells. PLA2 catalyzes the calcium-dependent hydrolysis of the 2-acyl groups in 3-sn-phosphoglycerides.</text>
</comment>
<comment type="catalytic activity">
    <reaction evidence="2 3">
        <text>a 1,2-diacyl-sn-glycero-3-phosphocholine + H2O = a 1-acyl-sn-glycero-3-phosphocholine + a fatty acid + H(+)</text>
        <dbReference type="Rhea" id="RHEA:15801"/>
        <dbReference type="ChEBI" id="CHEBI:15377"/>
        <dbReference type="ChEBI" id="CHEBI:15378"/>
        <dbReference type="ChEBI" id="CHEBI:28868"/>
        <dbReference type="ChEBI" id="CHEBI:57643"/>
        <dbReference type="ChEBI" id="CHEBI:58168"/>
        <dbReference type="EC" id="3.1.1.4"/>
    </reaction>
</comment>
<comment type="cofactor">
    <cofactor evidence="1">
        <name>Ca(2+)</name>
        <dbReference type="ChEBI" id="CHEBI:29108"/>
    </cofactor>
    <text evidence="1">Binds 1 Ca(2+) ion.</text>
</comment>
<comment type="subunit">
    <text evidence="5">Heterotrimer composed of an alpha-neurotoxin-like peptide of 8 kDa (AC P0CJ35), this neurotoxic phospholipase of 16 kDa and a serine protease inhibitor of 7 kDa (AC B7S4N9) at an approximate stoichiometry of 1:1:4; non-covalently linked.</text>
</comment>
<comment type="subcellular location">
    <subcellularLocation>
        <location evidence="4 5">Secreted</location>
    </subcellularLocation>
</comment>
<comment type="tissue specificity">
    <text evidence="4 5">Expressed by the venom gland.</text>
</comment>
<comment type="PTM">
    <text evidence="1">Contains 7 disulfide bonds.</text>
</comment>
<comment type="toxic dose">
    <text>Monomer: LD(50) is 500 ug/kg when injected into mice.</text>
</comment>
<comment type="toxic dose">
    <text>Heterotrimer: LD(50) is 50-100 ug/kg when injected into mice.</text>
</comment>
<comment type="similarity">
    <text evidence="6">Belongs to the phospholipase A2 family. Group I subfamily.</text>
</comment>
<comment type="online information" name="Wikipedia">
    <link uri="https://en.wikipedia.org/wiki/Taicatoxin"/>
    <text>Taicatoxin entry</text>
</comment>
<keyword id="KW-0106">Calcium</keyword>
<keyword id="KW-1221">Calcium-activated potassium channel impairing toxin</keyword>
<keyword id="KW-0903">Direct protein sequencing</keyword>
<keyword id="KW-1015">Disulfide bond</keyword>
<keyword id="KW-0378">Hydrolase</keyword>
<keyword id="KW-0872">Ion channel impairing toxin</keyword>
<keyword id="KW-0442">Lipid degradation</keyword>
<keyword id="KW-0443">Lipid metabolism</keyword>
<keyword id="KW-0479">Metal-binding</keyword>
<keyword id="KW-0528">Neurotoxin</keyword>
<keyword id="KW-0632">Potassium channel impairing toxin</keyword>
<keyword id="KW-0964">Secreted</keyword>
<keyword id="KW-0800">Toxin</keyword>
<proteinExistence type="evidence at protein level"/>
<evidence type="ECO:0000250" key="1"/>
<evidence type="ECO:0000255" key="2">
    <source>
        <dbReference type="PROSITE-ProRule" id="PRU10035"/>
    </source>
</evidence>
<evidence type="ECO:0000255" key="3">
    <source>
        <dbReference type="PROSITE-ProRule" id="PRU10036"/>
    </source>
</evidence>
<evidence type="ECO:0000269" key="4">
    <source>
    </source>
</evidence>
<evidence type="ECO:0000269" key="5">
    <source>
    </source>
</evidence>
<evidence type="ECO:0000305" key="6"/>
<organism>
    <name type="scientific">Oxyuranus scutellatus scutellatus</name>
    <name type="common">Australian taipan</name>
    <name type="synonym">Coastal taipan</name>
    <dbReference type="NCBI Taxonomy" id="8667"/>
    <lineage>
        <taxon>Eukaryota</taxon>
        <taxon>Metazoa</taxon>
        <taxon>Chordata</taxon>
        <taxon>Craniata</taxon>
        <taxon>Vertebrata</taxon>
        <taxon>Euteleostomi</taxon>
        <taxon>Lepidosauria</taxon>
        <taxon>Squamata</taxon>
        <taxon>Bifurcata</taxon>
        <taxon>Unidentata</taxon>
        <taxon>Episquamata</taxon>
        <taxon>Toxicofera</taxon>
        <taxon>Serpentes</taxon>
        <taxon>Colubroidea</taxon>
        <taxon>Elapidae</taxon>
        <taxon>Hydrophiinae</taxon>
        <taxon>Oxyuranus</taxon>
    </lineage>
</organism>